<name>RSMA_BRUC2</name>
<protein>
    <recommendedName>
        <fullName evidence="1">Ribosomal RNA small subunit methyltransferase A</fullName>
        <ecNumber evidence="1">2.1.1.182</ecNumber>
    </recommendedName>
    <alternativeName>
        <fullName evidence="1">16S rRNA (adenine(1518)-N(6)/adenine(1519)-N(6))-dimethyltransferase</fullName>
    </alternativeName>
    <alternativeName>
        <fullName evidence="1">16S rRNA dimethyladenosine transferase</fullName>
    </alternativeName>
    <alternativeName>
        <fullName evidence="1">16S rRNA dimethylase</fullName>
    </alternativeName>
    <alternativeName>
        <fullName evidence="1">S-adenosylmethionine-6-N', N'-adenosyl(rRNA) dimethyltransferase</fullName>
    </alternativeName>
</protein>
<reference key="1">
    <citation type="submission" date="2007-10" db="EMBL/GenBank/DDBJ databases">
        <title>Brucella canis ATCC 23365 whole genome shotgun sequencing project.</title>
        <authorList>
            <person name="Setubal J.C."/>
            <person name="Bowns C."/>
            <person name="Boyle S."/>
            <person name="Crasta O.R."/>
            <person name="Czar M.J."/>
            <person name="Dharmanolla C."/>
            <person name="Gillespie J.J."/>
            <person name="Kenyon R.W."/>
            <person name="Lu J."/>
            <person name="Mane S."/>
            <person name="Mohapatra S."/>
            <person name="Nagrani S."/>
            <person name="Purkayastha A."/>
            <person name="Rajasimha H.K."/>
            <person name="Shallom J.M."/>
            <person name="Shallom S."/>
            <person name="Shukla M."/>
            <person name="Snyder E.E."/>
            <person name="Sobral B.W."/>
            <person name="Wattam A.R."/>
            <person name="Will R."/>
            <person name="Williams K."/>
            <person name="Yoo H."/>
            <person name="Bruce D."/>
            <person name="Detter C."/>
            <person name="Munk C."/>
            <person name="Brettin T.S."/>
        </authorList>
    </citation>
    <scope>NUCLEOTIDE SEQUENCE [LARGE SCALE GENOMIC DNA]</scope>
    <source>
        <strain>ATCC 23365 / NCTC 10854 / RM-666</strain>
    </source>
</reference>
<evidence type="ECO:0000255" key="1">
    <source>
        <dbReference type="HAMAP-Rule" id="MF_00607"/>
    </source>
</evidence>
<keyword id="KW-0963">Cytoplasm</keyword>
<keyword id="KW-0489">Methyltransferase</keyword>
<keyword id="KW-1185">Reference proteome</keyword>
<keyword id="KW-0694">RNA-binding</keyword>
<keyword id="KW-0698">rRNA processing</keyword>
<keyword id="KW-0949">S-adenosyl-L-methionine</keyword>
<keyword id="KW-0808">Transferase</keyword>
<comment type="function">
    <text evidence="1">Specifically dimethylates two adjacent adenosines (A1518 and A1519) in the loop of a conserved hairpin near the 3'-end of 16S rRNA in the 30S particle. May play a critical role in biogenesis of 30S subunits.</text>
</comment>
<comment type="catalytic activity">
    <reaction evidence="1">
        <text>adenosine(1518)/adenosine(1519) in 16S rRNA + 4 S-adenosyl-L-methionine = N(6)-dimethyladenosine(1518)/N(6)-dimethyladenosine(1519) in 16S rRNA + 4 S-adenosyl-L-homocysteine + 4 H(+)</text>
        <dbReference type="Rhea" id="RHEA:19609"/>
        <dbReference type="Rhea" id="RHEA-COMP:10232"/>
        <dbReference type="Rhea" id="RHEA-COMP:10233"/>
        <dbReference type="ChEBI" id="CHEBI:15378"/>
        <dbReference type="ChEBI" id="CHEBI:57856"/>
        <dbReference type="ChEBI" id="CHEBI:59789"/>
        <dbReference type="ChEBI" id="CHEBI:74411"/>
        <dbReference type="ChEBI" id="CHEBI:74493"/>
        <dbReference type="EC" id="2.1.1.182"/>
    </reaction>
</comment>
<comment type="subcellular location">
    <subcellularLocation>
        <location evidence="1">Cytoplasm</location>
    </subcellularLocation>
</comment>
<comment type="similarity">
    <text evidence="1">Belongs to the class I-like SAM-binding methyltransferase superfamily. rRNA adenine N(6)-methyltransferase family. RsmA subfamily.</text>
</comment>
<sequence length="276" mass="30306">MSIDSLPPLREVIERHDLMPKKSLGQNFLFDLNLTSKIARQAGDLRDQPVIEVGPGPGGLTRALLAQGAYVTAIERDDRCLEALAEIAAHYPGRLRIIAGDALEQDFTALFPEGPKPRIVANLPYNVGTQLLLNWLLVEPWPPFYSSMTLMFQREVAERIVAKPDSDHYGRLGVLAGWRTQAKIAFDVPPQAFTPPPKVMSSVVHIVPRETPLPCRAEALGQITQAAFGQRRKMLRQSLKSIGGAALLEKTGIDGTRRAETLSVEEFVALANACLP</sequence>
<organism>
    <name type="scientific">Brucella canis (strain ATCC 23365 / NCTC 10854 / RM-666)</name>
    <dbReference type="NCBI Taxonomy" id="483179"/>
    <lineage>
        <taxon>Bacteria</taxon>
        <taxon>Pseudomonadati</taxon>
        <taxon>Pseudomonadota</taxon>
        <taxon>Alphaproteobacteria</taxon>
        <taxon>Hyphomicrobiales</taxon>
        <taxon>Brucellaceae</taxon>
        <taxon>Brucella/Ochrobactrum group</taxon>
        <taxon>Brucella</taxon>
    </lineage>
</organism>
<feature type="chain" id="PRO_1000082546" description="Ribosomal RNA small subunit methyltransferase A">
    <location>
        <begin position="1"/>
        <end position="276"/>
    </location>
</feature>
<feature type="binding site" evidence="1">
    <location>
        <position position="27"/>
    </location>
    <ligand>
        <name>S-adenosyl-L-methionine</name>
        <dbReference type="ChEBI" id="CHEBI:59789"/>
    </ligand>
</feature>
<feature type="binding site" evidence="1">
    <location>
        <position position="29"/>
    </location>
    <ligand>
        <name>S-adenosyl-L-methionine</name>
        <dbReference type="ChEBI" id="CHEBI:59789"/>
    </ligand>
</feature>
<feature type="binding site" evidence="1">
    <location>
        <position position="54"/>
    </location>
    <ligand>
        <name>S-adenosyl-L-methionine</name>
        <dbReference type="ChEBI" id="CHEBI:59789"/>
    </ligand>
</feature>
<feature type="binding site" evidence="1">
    <location>
        <position position="75"/>
    </location>
    <ligand>
        <name>S-adenosyl-L-methionine</name>
        <dbReference type="ChEBI" id="CHEBI:59789"/>
    </ligand>
</feature>
<feature type="binding site" evidence="1">
    <location>
        <position position="101"/>
    </location>
    <ligand>
        <name>S-adenosyl-L-methionine</name>
        <dbReference type="ChEBI" id="CHEBI:59789"/>
    </ligand>
</feature>
<feature type="binding site" evidence="1">
    <location>
        <position position="122"/>
    </location>
    <ligand>
        <name>S-adenosyl-L-methionine</name>
        <dbReference type="ChEBI" id="CHEBI:59789"/>
    </ligand>
</feature>
<dbReference type="EC" id="2.1.1.182" evidence="1"/>
<dbReference type="EMBL" id="CP000872">
    <property type="protein sequence ID" value="ABX61767.1"/>
    <property type="molecule type" value="Genomic_DNA"/>
</dbReference>
<dbReference type="RefSeq" id="WP_002963824.1">
    <property type="nucleotide sequence ID" value="NC_010103.1"/>
</dbReference>
<dbReference type="SMR" id="A9MA55"/>
<dbReference type="GeneID" id="97533994"/>
<dbReference type="KEGG" id="bcs:BCAN_A0694"/>
<dbReference type="HOGENOM" id="CLU_041220_0_1_5"/>
<dbReference type="PhylomeDB" id="A9MA55"/>
<dbReference type="Proteomes" id="UP000001385">
    <property type="component" value="Chromosome I"/>
</dbReference>
<dbReference type="GO" id="GO:0005829">
    <property type="term" value="C:cytosol"/>
    <property type="evidence" value="ECO:0007669"/>
    <property type="project" value="TreeGrafter"/>
</dbReference>
<dbReference type="GO" id="GO:0052908">
    <property type="term" value="F:16S rRNA (adenine(1518)-N(6)/adenine(1519)-N(6))-dimethyltransferase activity"/>
    <property type="evidence" value="ECO:0007669"/>
    <property type="project" value="UniProtKB-EC"/>
</dbReference>
<dbReference type="GO" id="GO:0003723">
    <property type="term" value="F:RNA binding"/>
    <property type="evidence" value="ECO:0007669"/>
    <property type="project" value="UniProtKB-KW"/>
</dbReference>
<dbReference type="CDD" id="cd02440">
    <property type="entry name" value="AdoMet_MTases"/>
    <property type="match status" value="1"/>
</dbReference>
<dbReference type="FunFam" id="1.10.8.100:FF:000001">
    <property type="entry name" value="Ribosomal RNA small subunit methyltransferase A"/>
    <property type="match status" value="1"/>
</dbReference>
<dbReference type="Gene3D" id="1.10.8.100">
    <property type="entry name" value="Ribosomal RNA adenine dimethylase-like, domain 2"/>
    <property type="match status" value="1"/>
</dbReference>
<dbReference type="Gene3D" id="3.40.50.150">
    <property type="entry name" value="Vaccinia Virus protein VP39"/>
    <property type="match status" value="1"/>
</dbReference>
<dbReference type="HAMAP" id="MF_00607">
    <property type="entry name" value="16SrRNA_methyltr_A"/>
    <property type="match status" value="1"/>
</dbReference>
<dbReference type="InterPro" id="IPR001737">
    <property type="entry name" value="KsgA/Erm"/>
</dbReference>
<dbReference type="InterPro" id="IPR023165">
    <property type="entry name" value="rRNA_Ade_diMease-like_C"/>
</dbReference>
<dbReference type="InterPro" id="IPR020596">
    <property type="entry name" value="rRNA_Ade_Mease_Trfase_CS"/>
</dbReference>
<dbReference type="InterPro" id="IPR020598">
    <property type="entry name" value="rRNA_Ade_methylase_Trfase_N"/>
</dbReference>
<dbReference type="InterPro" id="IPR011530">
    <property type="entry name" value="rRNA_adenine_dimethylase"/>
</dbReference>
<dbReference type="InterPro" id="IPR029063">
    <property type="entry name" value="SAM-dependent_MTases_sf"/>
</dbReference>
<dbReference type="NCBIfam" id="TIGR00755">
    <property type="entry name" value="ksgA"/>
    <property type="match status" value="1"/>
</dbReference>
<dbReference type="PANTHER" id="PTHR11727">
    <property type="entry name" value="DIMETHYLADENOSINE TRANSFERASE"/>
    <property type="match status" value="1"/>
</dbReference>
<dbReference type="PANTHER" id="PTHR11727:SF7">
    <property type="entry name" value="DIMETHYLADENOSINE TRANSFERASE-RELATED"/>
    <property type="match status" value="1"/>
</dbReference>
<dbReference type="Pfam" id="PF00398">
    <property type="entry name" value="RrnaAD"/>
    <property type="match status" value="1"/>
</dbReference>
<dbReference type="SMART" id="SM00650">
    <property type="entry name" value="rADc"/>
    <property type="match status" value="1"/>
</dbReference>
<dbReference type="SUPFAM" id="SSF53335">
    <property type="entry name" value="S-adenosyl-L-methionine-dependent methyltransferases"/>
    <property type="match status" value="1"/>
</dbReference>
<dbReference type="PROSITE" id="PS01131">
    <property type="entry name" value="RRNA_A_DIMETH"/>
    <property type="match status" value="1"/>
</dbReference>
<dbReference type="PROSITE" id="PS51689">
    <property type="entry name" value="SAM_RNA_A_N6_MT"/>
    <property type="match status" value="1"/>
</dbReference>
<proteinExistence type="inferred from homology"/>
<accession>A9MA55</accession>
<gene>
    <name evidence="1" type="primary">rsmA</name>
    <name evidence="1" type="synonym">ksgA</name>
    <name type="ordered locus">BCAN_A0694</name>
</gene>